<dbReference type="EC" id="4.3.2.10" evidence="1"/>
<dbReference type="EMBL" id="CP000780">
    <property type="protein sequence ID" value="ABS55177.1"/>
    <property type="status" value="ALT_INIT"/>
    <property type="molecule type" value="Genomic_DNA"/>
</dbReference>
<dbReference type="RefSeq" id="WP_048068248.1">
    <property type="nucleotide sequence ID" value="NC_009712.1"/>
</dbReference>
<dbReference type="SMR" id="A7I616"/>
<dbReference type="STRING" id="456442.Mboo_0659"/>
<dbReference type="GeneID" id="5411311"/>
<dbReference type="KEGG" id="mbn:Mboo_0659"/>
<dbReference type="eggNOG" id="arCOG00617">
    <property type="taxonomic scope" value="Archaea"/>
</dbReference>
<dbReference type="HOGENOM" id="CLU_048577_4_0_2"/>
<dbReference type="OrthoDB" id="6261at2157"/>
<dbReference type="UniPathway" id="UPA00031">
    <property type="reaction ID" value="UER00010"/>
</dbReference>
<dbReference type="Proteomes" id="UP000002408">
    <property type="component" value="Chromosome"/>
</dbReference>
<dbReference type="GO" id="GO:0005737">
    <property type="term" value="C:cytoplasm"/>
    <property type="evidence" value="ECO:0007669"/>
    <property type="project" value="UniProtKB-SubCell"/>
</dbReference>
<dbReference type="GO" id="GO:0000107">
    <property type="term" value="F:imidazoleglycerol-phosphate synthase activity"/>
    <property type="evidence" value="ECO:0007669"/>
    <property type="project" value="UniProtKB-UniRule"/>
</dbReference>
<dbReference type="GO" id="GO:0016829">
    <property type="term" value="F:lyase activity"/>
    <property type="evidence" value="ECO:0007669"/>
    <property type="project" value="UniProtKB-KW"/>
</dbReference>
<dbReference type="GO" id="GO:0000105">
    <property type="term" value="P:L-histidine biosynthetic process"/>
    <property type="evidence" value="ECO:0007669"/>
    <property type="project" value="UniProtKB-UniRule"/>
</dbReference>
<dbReference type="CDD" id="cd04731">
    <property type="entry name" value="HisF"/>
    <property type="match status" value="1"/>
</dbReference>
<dbReference type="FunFam" id="3.20.20.70:FF:000006">
    <property type="entry name" value="Imidazole glycerol phosphate synthase subunit HisF"/>
    <property type="match status" value="1"/>
</dbReference>
<dbReference type="Gene3D" id="3.20.20.70">
    <property type="entry name" value="Aldolase class I"/>
    <property type="match status" value="1"/>
</dbReference>
<dbReference type="HAMAP" id="MF_01013">
    <property type="entry name" value="HisF"/>
    <property type="match status" value="1"/>
</dbReference>
<dbReference type="InterPro" id="IPR013785">
    <property type="entry name" value="Aldolase_TIM"/>
</dbReference>
<dbReference type="InterPro" id="IPR006062">
    <property type="entry name" value="His_biosynth"/>
</dbReference>
<dbReference type="InterPro" id="IPR004651">
    <property type="entry name" value="HisF"/>
</dbReference>
<dbReference type="InterPro" id="IPR050064">
    <property type="entry name" value="IGPS_HisA/HisF"/>
</dbReference>
<dbReference type="InterPro" id="IPR011060">
    <property type="entry name" value="RibuloseP-bd_barrel"/>
</dbReference>
<dbReference type="NCBIfam" id="TIGR00735">
    <property type="entry name" value="hisF"/>
    <property type="match status" value="1"/>
</dbReference>
<dbReference type="PANTHER" id="PTHR21235:SF2">
    <property type="entry name" value="IMIDAZOLE GLYCEROL PHOSPHATE SYNTHASE HISHF"/>
    <property type="match status" value="1"/>
</dbReference>
<dbReference type="PANTHER" id="PTHR21235">
    <property type="entry name" value="IMIDAZOLE GLYCEROL PHOSPHATE SYNTHASE SUBUNIT HISF/H IGP SYNTHASE SUBUNIT HISF/H"/>
    <property type="match status" value="1"/>
</dbReference>
<dbReference type="Pfam" id="PF00977">
    <property type="entry name" value="His_biosynth"/>
    <property type="match status" value="1"/>
</dbReference>
<dbReference type="SUPFAM" id="SSF51366">
    <property type="entry name" value="Ribulose-phoshate binding barrel"/>
    <property type="match status" value="1"/>
</dbReference>
<protein>
    <recommendedName>
        <fullName evidence="1">Imidazole glycerol phosphate synthase subunit HisF</fullName>
        <ecNumber evidence="1">4.3.2.10</ecNumber>
    </recommendedName>
    <alternativeName>
        <fullName evidence="1">IGP synthase cyclase subunit</fullName>
    </alternativeName>
    <alternativeName>
        <fullName evidence="1">IGP synthase subunit HisF</fullName>
    </alternativeName>
    <alternativeName>
        <fullName evidence="1">ImGP synthase subunit HisF</fullName>
        <shortName evidence="1">IGPS subunit HisF</shortName>
    </alternativeName>
</protein>
<evidence type="ECO:0000255" key="1">
    <source>
        <dbReference type="HAMAP-Rule" id="MF_01013"/>
    </source>
</evidence>
<evidence type="ECO:0000305" key="2"/>
<name>HIS6_METB6</name>
<proteinExistence type="inferred from homology"/>
<organism>
    <name type="scientific">Methanoregula boonei (strain DSM 21154 / JCM 14090 / 6A8)</name>
    <dbReference type="NCBI Taxonomy" id="456442"/>
    <lineage>
        <taxon>Archaea</taxon>
        <taxon>Methanobacteriati</taxon>
        <taxon>Methanobacteriota</taxon>
        <taxon>Stenosarchaea group</taxon>
        <taxon>Methanomicrobia</taxon>
        <taxon>Methanomicrobiales</taxon>
        <taxon>Methanoregulaceae</taxon>
        <taxon>Methanoregula</taxon>
    </lineage>
</organism>
<keyword id="KW-0028">Amino-acid biosynthesis</keyword>
<keyword id="KW-0963">Cytoplasm</keyword>
<keyword id="KW-0368">Histidine biosynthesis</keyword>
<keyword id="KW-0456">Lyase</keyword>
<keyword id="KW-1185">Reference proteome</keyword>
<accession>A7I616</accession>
<reference key="1">
    <citation type="journal article" date="2015" name="Microbiology">
        <title>Genome of Methanoregula boonei 6A8 reveals adaptations to oligotrophic peatland environments.</title>
        <authorList>
            <person name="Braeuer S."/>
            <person name="Cadillo-Quiroz H."/>
            <person name="Kyrpides N."/>
            <person name="Woyke T."/>
            <person name="Goodwin L."/>
            <person name="Detter C."/>
            <person name="Podell S."/>
            <person name="Yavitt J.B."/>
            <person name="Zinder S.H."/>
        </authorList>
    </citation>
    <scope>NUCLEOTIDE SEQUENCE [LARGE SCALE GENOMIC DNA]</scope>
    <source>
        <strain>DSM 21154 / JCM 14090 / 6A8</strain>
    </source>
</reference>
<sequence length="268" mass="28915">MVLTRRIIPCLDLKDGRVVKGTNFLGLRDAGDPVELAGRYNEQGADEVVFLDITASKEKRGIIIELIQRAADQLFLPLTVGGGLRTLDDIQQILRAGADKVSLNTSAVHDPSIITKGAESFGTQCIVVAMDVRRNFTLNPEAVPVRLCDGTTCWYEVVIYGGSKPTGIDAVRWAKEAEERGAGEILLTSMETDGTKNGFDIAVTRAISEAANIPVIASGGVGTLEHFYEGFTRGKADACLAASVFHYGEMSVRDVKEYLKGKGIPVRL</sequence>
<feature type="chain" id="PRO_0000319465" description="Imidazole glycerol phosphate synthase subunit HisF">
    <location>
        <begin position="1"/>
        <end position="268"/>
    </location>
</feature>
<feature type="active site" evidence="1">
    <location>
        <position position="12"/>
    </location>
</feature>
<feature type="active site" evidence="1">
    <location>
        <position position="131"/>
    </location>
</feature>
<comment type="function">
    <text evidence="1">IGPS catalyzes the conversion of PRFAR and glutamine to IGP, AICAR and glutamate. The HisF subunit catalyzes the cyclization activity that produces IGP and AICAR from PRFAR using the ammonia provided by the HisH subunit.</text>
</comment>
<comment type="catalytic activity">
    <reaction evidence="1">
        <text>5-[(5-phospho-1-deoxy-D-ribulos-1-ylimino)methylamino]-1-(5-phospho-beta-D-ribosyl)imidazole-4-carboxamide + L-glutamine = D-erythro-1-(imidazol-4-yl)glycerol 3-phosphate + 5-amino-1-(5-phospho-beta-D-ribosyl)imidazole-4-carboxamide + L-glutamate + H(+)</text>
        <dbReference type="Rhea" id="RHEA:24793"/>
        <dbReference type="ChEBI" id="CHEBI:15378"/>
        <dbReference type="ChEBI" id="CHEBI:29985"/>
        <dbReference type="ChEBI" id="CHEBI:58278"/>
        <dbReference type="ChEBI" id="CHEBI:58359"/>
        <dbReference type="ChEBI" id="CHEBI:58475"/>
        <dbReference type="ChEBI" id="CHEBI:58525"/>
        <dbReference type="EC" id="4.3.2.10"/>
    </reaction>
</comment>
<comment type="pathway">
    <text evidence="1">Amino-acid biosynthesis; L-histidine biosynthesis; L-histidine from 5-phospho-alpha-D-ribose 1-diphosphate: step 5/9.</text>
</comment>
<comment type="subunit">
    <text evidence="1">Heterodimer of HisH and HisF.</text>
</comment>
<comment type="subcellular location">
    <subcellularLocation>
        <location evidence="1">Cytoplasm</location>
    </subcellularLocation>
</comment>
<comment type="similarity">
    <text evidence="1">Belongs to the HisA/HisF family.</text>
</comment>
<comment type="sequence caution" evidence="2">
    <conflict type="erroneous initiation">
        <sequence resource="EMBL-CDS" id="ABS55177"/>
    </conflict>
</comment>
<gene>
    <name evidence="1" type="primary">hisF</name>
    <name type="ordered locus">Mboo_0659</name>
</gene>